<proteinExistence type="inferred from homology"/>
<name>DNAJ_BURM9</name>
<keyword id="KW-0143">Chaperone</keyword>
<keyword id="KW-0963">Cytoplasm</keyword>
<keyword id="KW-0235">DNA replication</keyword>
<keyword id="KW-0479">Metal-binding</keyword>
<keyword id="KW-0677">Repeat</keyword>
<keyword id="KW-0346">Stress response</keyword>
<keyword id="KW-0862">Zinc</keyword>
<keyword id="KW-0863">Zinc-finger</keyword>
<protein>
    <recommendedName>
        <fullName evidence="1">Chaperone protein DnaJ</fullName>
    </recommendedName>
</protein>
<comment type="function">
    <text evidence="1">Participates actively in the response to hyperosmotic and heat shock by preventing the aggregation of stress-denatured proteins and by disaggregating proteins, also in an autonomous, DnaK-independent fashion. Unfolded proteins bind initially to DnaJ; upon interaction with the DnaJ-bound protein, DnaK hydrolyzes its bound ATP, resulting in the formation of a stable complex. GrpE releases ADP from DnaK; ATP binding to DnaK triggers the release of the substrate protein, thus completing the reaction cycle. Several rounds of ATP-dependent interactions between DnaJ, DnaK and GrpE are required for fully efficient folding. Also involved, together with DnaK and GrpE, in the DNA replication of plasmids through activation of initiation proteins.</text>
</comment>
<comment type="cofactor">
    <cofactor evidence="1">
        <name>Zn(2+)</name>
        <dbReference type="ChEBI" id="CHEBI:29105"/>
    </cofactor>
    <text evidence="1">Binds 2 Zn(2+) ions per monomer.</text>
</comment>
<comment type="subunit">
    <text evidence="1">Homodimer.</text>
</comment>
<comment type="subcellular location">
    <subcellularLocation>
        <location evidence="1">Cytoplasm</location>
    </subcellularLocation>
</comment>
<comment type="domain">
    <text evidence="1">The J domain is necessary and sufficient to stimulate DnaK ATPase activity. Zinc center 1 plays an important role in the autonomous, DnaK-independent chaperone activity of DnaJ. Zinc center 2 is essential for interaction with DnaK and for DnaJ activity.</text>
</comment>
<comment type="similarity">
    <text evidence="1">Belongs to the DnaJ family.</text>
</comment>
<reference key="1">
    <citation type="journal article" date="2010" name="Genome Biol. Evol.">
        <title>Continuing evolution of Burkholderia mallei through genome reduction and large-scale rearrangements.</title>
        <authorList>
            <person name="Losada L."/>
            <person name="Ronning C.M."/>
            <person name="DeShazer D."/>
            <person name="Woods D."/>
            <person name="Fedorova N."/>
            <person name="Kim H.S."/>
            <person name="Shabalina S.A."/>
            <person name="Pearson T.R."/>
            <person name="Brinkac L."/>
            <person name="Tan P."/>
            <person name="Nandi T."/>
            <person name="Crabtree J."/>
            <person name="Badger J."/>
            <person name="Beckstrom-Sternberg S."/>
            <person name="Saqib M."/>
            <person name="Schutzer S.E."/>
            <person name="Keim P."/>
            <person name="Nierman W.C."/>
        </authorList>
    </citation>
    <scope>NUCLEOTIDE SEQUENCE [LARGE SCALE GENOMIC DNA]</scope>
    <source>
        <strain>NCTC 10229</strain>
    </source>
</reference>
<dbReference type="EMBL" id="CP000546">
    <property type="protein sequence ID" value="ABN01267.1"/>
    <property type="molecule type" value="Genomic_DNA"/>
</dbReference>
<dbReference type="RefSeq" id="WP_004194374.1">
    <property type="nucleotide sequence ID" value="NC_008836.1"/>
</dbReference>
<dbReference type="SMR" id="A2S563"/>
<dbReference type="GeneID" id="92980017"/>
<dbReference type="KEGG" id="bml:BMA10229_A1097"/>
<dbReference type="HOGENOM" id="CLU_017633_0_7_4"/>
<dbReference type="Proteomes" id="UP000002283">
    <property type="component" value="Chromosome I"/>
</dbReference>
<dbReference type="GO" id="GO:0005737">
    <property type="term" value="C:cytoplasm"/>
    <property type="evidence" value="ECO:0007669"/>
    <property type="project" value="UniProtKB-SubCell"/>
</dbReference>
<dbReference type="GO" id="GO:0005524">
    <property type="term" value="F:ATP binding"/>
    <property type="evidence" value="ECO:0007669"/>
    <property type="project" value="InterPro"/>
</dbReference>
<dbReference type="GO" id="GO:0031072">
    <property type="term" value="F:heat shock protein binding"/>
    <property type="evidence" value="ECO:0007669"/>
    <property type="project" value="InterPro"/>
</dbReference>
<dbReference type="GO" id="GO:0051082">
    <property type="term" value="F:unfolded protein binding"/>
    <property type="evidence" value="ECO:0007669"/>
    <property type="project" value="UniProtKB-UniRule"/>
</dbReference>
<dbReference type="GO" id="GO:0008270">
    <property type="term" value="F:zinc ion binding"/>
    <property type="evidence" value="ECO:0007669"/>
    <property type="project" value="UniProtKB-UniRule"/>
</dbReference>
<dbReference type="GO" id="GO:0051085">
    <property type="term" value="P:chaperone cofactor-dependent protein refolding"/>
    <property type="evidence" value="ECO:0007669"/>
    <property type="project" value="TreeGrafter"/>
</dbReference>
<dbReference type="GO" id="GO:0006260">
    <property type="term" value="P:DNA replication"/>
    <property type="evidence" value="ECO:0007669"/>
    <property type="project" value="UniProtKB-KW"/>
</dbReference>
<dbReference type="GO" id="GO:0042026">
    <property type="term" value="P:protein refolding"/>
    <property type="evidence" value="ECO:0007669"/>
    <property type="project" value="TreeGrafter"/>
</dbReference>
<dbReference type="GO" id="GO:0009408">
    <property type="term" value="P:response to heat"/>
    <property type="evidence" value="ECO:0007669"/>
    <property type="project" value="InterPro"/>
</dbReference>
<dbReference type="CDD" id="cd06257">
    <property type="entry name" value="DnaJ"/>
    <property type="match status" value="1"/>
</dbReference>
<dbReference type="CDD" id="cd10747">
    <property type="entry name" value="DnaJ_C"/>
    <property type="match status" value="1"/>
</dbReference>
<dbReference type="CDD" id="cd10719">
    <property type="entry name" value="DnaJ_zf"/>
    <property type="match status" value="1"/>
</dbReference>
<dbReference type="FunFam" id="1.10.287.110:FF:000031">
    <property type="entry name" value="Molecular chaperone DnaJ"/>
    <property type="match status" value="1"/>
</dbReference>
<dbReference type="FunFam" id="2.10.230.10:FF:000002">
    <property type="entry name" value="Molecular chaperone DnaJ"/>
    <property type="match status" value="1"/>
</dbReference>
<dbReference type="FunFam" id="2.60.260.20:FF:000004">
    <property type="entry name" value="Molecular chaperone DnaJ"/>
    <property type="match status" value="1"/>
</dbReference>
<dbReference type="Gene3D" id="1.10.287.110">
    <property type="entry name" value="DnaJ domain"/>
    <property type="match status" value="1"/>
</dbReference>
<dbReference type="Gene3D" id="2.10.230.10">
    <property type="entry name" value="Heat shock protein DnaJ, cysteine-rich domain"/>
    <property type="match status" value="1"/>
</dbReference>
<dbReference type="Gene3D" id="2.60.260.20">
    <property type="entry name" value="Urease metallochaperone UreE, N-terminal domain"/>
    <property type="match status" value="2"/>
</dbReference>
<dbReference type="HAMAP" id="MF_01152">
    <property type="entry name" value="DnaJ"/>
    <property type="match status" value="1"/>
</dbReference>
<dbReference type="InterPro" id="IPR012724">
    <property type="entry name" value="DnaJ"/>
</dbReference>
<dbReference type="InterPro" id="IPR002939">
    <property type="entry name" value="DnaJ_C"/>
</dbReference>
<dbReference type="InterPro" id="IPR001623">
    <property type="entry name" value="DnaJ_domain"/>
</dbReference>
<dbReference type="InterPro" id="IPR018253">
    <property type="entry name" value="DnaJ_domain_CS"/>
</dbReference>
<dbReference type="InterPro" id="IPR008971">
    <property type="entry name" value="HSP40/DnaJ_pept-bd"/>
</dbReference>
<dbReference type="InterPro" id="IPR001305">
    <property type="entry name" value="HSP_DnaJ_Cys-rich_dom"/>
</dbReference>
<dbReference type="InterPro" id="IPR036410">
    <property type="entry name" value="HSP_DnaJ_Cys-rich_dom_sf"/>
</dbReference>
<dbReference type="InterPro" id="IPR036869">
    <property type="entry name" value="J_dom_sf"/>
</dbReference>
<dbReference type="NCBIfam" id="TIGR02349">
    <property type="entry name" value="DnaJ_bact"/>
    <property type="match status" value="1"/>
</dbReference>
<dbReference type="NCBIfam" id="NF008035">
    <property type="entry name" value="PRK10767.1"/>
    <property type="match status" value="1"/>
</dbReference>
<dbReference type="PANTHER" id="PTHR43096:SF48">
    <property type="entry name" value="CHAPERONE PROTEIN DNAJ"/>
    <property type="match status" value="1"/>
</dbReference>
<dbReference type="PANTHER" id="PTHR43096">
    <property type="entry name" value="DNAJ HOMOLOG 1, MITOCHONDRIAL-RELATED"/>
    <property type="match status" value="1"/>
</dbReference>
<dbReference type="Pfam" id="PF00226">
    <property type="entry name" value="DnaJ"/>
    <property type="match status" value="1"/>
</dbReference>
<dbReference type="Pfam" id="PF01556">
    <property type="entry name" value="DnaJ_C"/>
    <property type="match status" value="1"/>
</dbReference>
<dbReference type="Pfam" id="PF00684">
    <property type="entry name" value="DnaJ_CXXCXGXG"/>
    <property type="match status" value="1"/>
</dbReference>
<dbReference type="PRINTS" id="PR00625">
    <property type="entry name" value="JDOMAIN"/>
</dbReference>
<dbReference type="SMART" id="SM00271">
    <property type="entry name" value="DnaJ"/>
    <property type="match status" value="1"/>
</dbReference>
<dbReference type="SUPFAM" id="SSF46565">
    <property type="entry name" value="Chaperone J-domain"/>
    <property type="match status" value="1"/>
</dbReference>
<dbReference type="SUPFAM" id="SSF57938">
    <property type="entry name" value="DnaJ/Hsp40 cysteine-rich domain"/>
    <property type="match status" value="1"/>
</dbReference>
<dbReference type="SUPFAM" id="SSF49493">
    <property type="entry name" value="HSP40/DnaJ peptide-binding domain"/>
    <property type="match status" value="2"/>
</dbReference>
<dbReference type="PROSITE" id="PS00636">
    <property type="entry name" value="DNAJ_1"/>
    <property type="match status" value="1"/>
</dbReference>
<dbReference type="PROSITE" id="PS50076">
    <property type="entry name" value="DNAJ_2"/>
    <property type="match status" value="1"/>
</dbReference>
<dbReference type="PROSITE" id="PS51188">
    <property type="entry name" value="ZF_CR"/>
    <property type="match status" value="1"/>
</dbReference>
<sequence length="376" mass="40549">MAKRDYYEVLGVAKNASDDEIKKAYRKLAMKYHPDRNPDSKDAEEHFKEAKEAYEMLSDGQKRAAYDQYGHAGVDPNVGAAGAQGFGGFADAFGDIFGDIFGQAAGGGRARGGPQVYRGADLRYSMEITLEQAAHGYDTQIRVPSWAACGVCHGSGAKPGTKPETCPTCHGQGTVRMSQGFFSIQQTCPKCHGTGTYIPEPCAHCHGSGKVKETKTLEVKIPAGIDDGMRIRSAGNGEPGINGGPSGDLYVEIHIKPHAVFERDGDDLHCQMPIPFTTAALGGEIEVPTLAGRASFTVPEGTQSGKTFRLRGKGIKGLHSSIAGDLYVHVQVETPVKLTDQQRDLLKQFEKSLAEGGPRHSPQSKSWFDRVKSFFE</sequence>
<gene>
    <name evidence="1" type="primary">dnaJ</name>
    <name type="ordered locus">BMA10229_A1097</name>
</gene>
<evidence type="ECO:0000255" key="1">
    <source>
        <dbReference type="HAMAP-Rule" id="MF_01152"/>
    </source>
</evidence>
<organism>
    <name type="scientific">Burkholderia mallei (strain NCTC 10229)</name>
    <dbReference type="NCBI Taxonomy" id="412022"/>
    <lineage>
        <taxon>Bacteria</taxon>
        <taxon>Pseudomonadati</taxon>
        <taxon>Pseudomonadota</taxon>
        <taxon>Betaproteobacteria</taxon>
        <taxon>Burkholderiales</taxon>
        <taxon>Burkholderiaceae</taxon>
        <taxon>Burkholderia</taxon>
        <taxon>pseudomallei group</taxon>
    </lineage>
</organism>
<accession>A2S563</accession>
<feature type="chain" id="PRO_1000085158" description="Chaperone protein DnaJ">
    <location>
        <begin position="1"/>
        <end position="376"/>
    </location>
</feature>
<feature type="domain" description="J" evidence="1">
    <location>
        <begin position="5"/>
        <end position="70"/>
    </location>
</feature>
<feature type="repeat" description="CXXCXGXG motif">
    <location>
        <begin position="149"/>
        <end position="156"/>
    </location>
</feature>
<feature type="repeat" description="CXXCXGXG motif">
    <location>
        <begin position="166"/>
        <end position="173"/>
    </location>
</feature>
<feature type="repeat" description="CXXCXGXG motif">
    <location>
        <begin position="188"/>
        <end position="195"/>
    </location>
</feature>
<feature type="repeat" description="CXXCXGXG motif">
    <location>
        <begin position="202"/>
        <end position="209"/>
    </location>
</feature>
<feature type="zinc finger region" description="CR-type" evidence="1">
    <location>
        <begin position="136"/>
        <end position="214"/>
    </location>
</feature>
<feature type="binding site" evidence="1">
    <location>
        <position position="149"/>
    </location>
    <ligand>
        <name>Zn(2+)</name>
        <dbReference type="ChEBI" id="CHEBI:29105"/>
        <label>1</label>
    </ligand>
</feature>
<feature type="binding site" evidence="1">
    <location>
        <position position="152"/>
    </location>
    <ligand>
        <name>Zn(2+)</name>
        <dbReference type="ChEBI" id="CHEBI:29105"/>
        <label>1</label>
    </ligand>
</feature>
<feature type="binding site" evidence="1">
    <location>
        <position position="166"/>
    </location>
    <ligand>
        <name>Zn(2+)</name>
        <dbReference type="ChEBI" id="CHEBI:29105"/>
        <label>2</label>
    </ligand>
</feature>
<feature type="binding site" evidence="1">
    <location>
        <position position="169"/>
    </location>
    <ligand>
        <name>Zn(2+)</name>
        <dbReference type="ChEBI" id="CHEBI:29105"/>
        <label>2</label>
    </ligand>
</feature>
<feature type="binding site" evidence="1">
    <location>
        <position position="188"/>
    </location>
    <ligand>
        <name>Zn(2+)</name>
        <dbReference type="ChEBI" id="CHEBI:29105"/>
        <label>2</label>
    </ligand>
</feature>
<feature type="binding site" evidence="1">
    <location>
        <position position="191"/>
    </location>
    <ligand>
        <name>Zn(2+)</name>
        <dbReference type="ChEBI" id="CHEBI:29105"/>
        <label>2</label>
    </ligand>
</feature>
<feature type="binding site" evidence="1">
    <location>
        <position position="202"/>
    </location>
    <ligand>
        <name>Zn(2+)</name>
        <dbReference type="ChEBI" id="CHEBI:29105"/>
        <label>1</label>
    </ligand>
</feature>
<feature type="binding site" evidence="1">
    <location>
        <position position="205"/>
    </location>
    <ligand>
        <name>Zn(2+)</name>
        <dbReference type="ChEBI" id="CHEBI:29105"/>
        <label>1</label>
    </ligand>
</feature>